<organism>
    <name type="scientific">Vibrio cholerae serotype O1 (strain M66-2)</name>
    <dbReference type="NCBI Taxonomy" id="579112"/>
    <lineage>
        <taxon>Bacteria</taxon>
        <taxon>Pseudomonadati</taxon>
        <taxon>Pseudomonadota</taxon>
        <taxon>Gammaproteobacteria</taxon>
        <taxon>Vibrionales</taxon>
        <taxon>Vibrionaceae</taxon>
        <taxon>Vibrio</taxon>
    </lineage>
</organism>
<gene>
    <name evidence="1" type="primary">queC</name>
    <name type="ordered locus">VCM66_1321</name>
</gene>
<dbReference type="EC" id="6.3.4.20" evidence="1"/>
<dbReference type="EMBL" id="CP001233">
    <property type="protein sequence ID" value="ACP05637.1"/>
    <property type="molecule type" value="Genomic_DNA"/>
</dbReference>
<dbReference type="RefSeq" id="WP_000710446.1">
    <property type="nucleotide sequence ID" value="NC_012578.1"/>
</dbReference>
<dbReference type="SMR" id="C3LM61"/>
<dbReference type="KEGG" id="vcm:VCM66_1321"/>
<dbReference type="HOGENOM" id="CLU_081854_0_0_6"/>
<dbReference type="UniPathway" id="UPA00391"/>
<dbReference type="Proteomes" id="UP000001217">
    <property type="component" value="Chromosome I"/>
</dbReference>
<dbReference type="GO" id="GO:0005524">
    <property type="term" value="F:ATP binding"/>
    <property type="evidence" value="ECO:0007669"/>
    <property type="project" value="UniProtKB-UniRule"/>
</dbReference>
<dbReference type="GO" id="GO:0016879">
    <property type="term" value="F:ligase activity, forming carbon-nitrogen bonds"/>
    <property type="evidence" value="ECO:0007669"/>
    <property type="project" value="UniProtKB-UniRule"/>
</dbReference>
<dbReference type="GO" id="GO:0008270">
    <property type="term" value="F:zinc ion binding"/>
    <property type="evidence" value="ECO:0007669"/>
    <property type="project" value="UniProtKB-UniRule"/>
</dbReference>
<dbReference type="GO" id="GO:0008616">
    <property type="term" value="P:queuosine biosynthetic process"/>
    <property type="evidence" value="ECO:0007669"/>
    <property type="project" value="UniProtKB-UniRule"/>
</dbReference>
<dbReference type="CDD" id="cd01995">
    <property type="entry name" value="QueC-like"/>
    <property type="match status" value="1"/>
</dbReference>
<dbReference type="FunFam" id="3.40.50.620:FF:000017">
    <property type="entry name" value="7-cyano-7-deazaguanine synthase"/>
    <property type="match status" value="1"/>
</dbReference>
<dbReference type="Gene3D" id="3.40.50.620">
    <property type="entry name" value="HUPs"/>
    <property type="match status" value="1"/>
</dbReference>
<dbReference type="HAMAP" id="MF_01633">
    <property type="entry name" value="QueC"/>
    <property type="match status" value="1"/>
</dbReference>
<dbReference type="InterPro" id="IPR018317">
    <property type="entry name" value="QueC"/>
</dbReference>
<dbReference type="InterPro" id="IPR014729">
    <property type="entry name" value="Rossmann-like_a/b/a_fold"/>
</dbReference>
<dbReference type="NCBIfam" id="TIGR00364">
    <property type="entry name" value="7-cyano-7-deazaguanine synthase QueC"/>
    <property type="match status" value="1"/>
</dbReference>
<dbReference type="NCBIfam" id="NF008317">
    <property type="entry name" value="PRK11106.1"/>
    <property type="match status" value="1"/>
</dbReference>
<dbReference type="PANTHER" id="PTHR42914">
    <property type="entry name" value="7-CYANO-7-DEAZAGUANINE SYNTHASE"/>
    <property type="match status" value="1"/>
</dbReference>
<dbReference type="PANTHER" id="PTHR42914:SF1">
    <property type="entry name" value="7-CYANO-7-DEAZAGUANINE SYNTHASE"/>
    <property type="match status" value="1"/>
</dbReference>
<dbReference type="Pfam" id="PF06508">
    <property type="entry name" value="QueC"/>
    <property type="match status" value="1"/>
</dbReference>
<dbReference type="PIRSF" id="PIRSF006293">
    <property type="entry name" value="ExsB"/>
    <property type="match status" value="1"/>
</dbReference>
<dbReference type="SUPFAM" id="SSF52402">
    <property type="entry name" value="Adenine nucleotide alpha hydrolases-like"/>
    <property type="match status" value="1"/>
</dbReference>
<keyword id="KW-0067">ATP-binding</keyword>
<keyword id="KW-0436">Ligase</keyword>
<keyword id="KW-0479">Metal-binding</keyword>
<keyword id="KW-0547">Nucleotide-binding</keyword>
<keyword id="KW-0671">Queuosine biosynthesis</keyword>
<keyword id="KW-0862">Zinc</keyword>
<name>QUEC_VIBCM</name>
<proteinExistence type="inferred from homology"/>
<accession>C3LM61</accession>
<comment type="function">
    <text evidence="1">Catalyzes the ATP-dependent conversion of 7-carboxy-7-deazaguanine (CDG) to 7-cyano-7-deazaguanine (preQ(0)).</text>
</comment>
<comment type="catalytic activity">
    <reaction evidence="1">
        <text>7-carboxy-7-deazaguanine + NH4(+) + ATP = 7-cyano-7-deazaguanine + ADP + phosphate + H2O + H(+)</text>
        <dbReference type="Rhea" id="RHEA:27982"/>
        <dbReference type="ChEBI" id="CHEBI:15377"/>
        <dbReference type="ChEBI" id="CHEBI:15378"/>
        <dbReference type="ChEBI" id="CHEBI:28938"/>
        <dbReference type="ChEBI" id="CHEBI:30616"/>
        <dbReference type="ChEBI" id="CHEBI:43474"/>
        <dbReference type="ChEBI" id="CHEBI:45075"/>
        <dbReference type="ChEBI" id="CHEBI:61036"/>
        <dbReference type="ChEBI" id="CHEBI:456216"/>
        <dbReference type="EC" id="6.3.4.20"/>
    </reaction>
</comment>
<comment type="cofactor">
    <cofactor evidence="1">
        <name>Zn(2+)</name>
        <dbReference type="ChEBI" id="CHEBI:29105"/>
    </cofactor>
    <text evidence="1">Binds 1 zinc ion per subunit.</text>
</comment>
<comment type="pathway">
    <text evidence="1">Purine metabolism; 7-cyano-7-deazaguanine biosynthesis.</text>
</comment>
<comment type="similarity">
    <text evidence="1">Belongs to the QueC family.</text>
</comment>
<feature type="chain" id="PRO_1000186642" description="7-cyano-7-deazaguanine synthase">
    <location>
        <begin position="1"/>
        <end position="231"/>
    </location>
</feature>
<feature type="binding site" evidence="1">
    <location>
        <begin position="8"/>
        <end position="18"/>
    </location>
    <ligand>
        <name>ATP</name>
        <dbReference type="ChEBI" id="CHEBI:30616"/>
    </ligand>
</feature>
<feature type="binding site" evidence="1">
    <location>
        <position position="187"/>
    </location>
    <ligand>
        <name>Zn(2+)</name>
        <dbReference type="ChEBI" id="CHEBI:29105"/>
    </ligand>
</feature>
<feature type="binding site" evidence="1">
    <location>
        <position position="196"/>
    </location>
    <ligand>
        <name>Zn(2+)</name>
        <dbReference type="ChEBI" id="CHEBI:29105"/>
    </ligand>
</feature>
<feature type="binding site" evidence="1">
    <location>
        <position position="199"/>
    </location>
    <ligand>
        <name>Zn(2+)</name>
        <dbReference type="ChEBI" id="CHEBI:29105"/>
    </ligand>
</feature>
<feature type="binding site" evidence="1">
    <location>
        <position position="202"/>
    </location>
    <ligand>
        <name>Zn(2+)</name>
        <dbReference type="ChEBI" id="CHEBI:29105"/>
    </ligand>
</feature>
<evidence type="ECO:0000255" key="1">
    <source>
        <dbReference type="HAMAP-Rule" id="MF_01633"/>
    </source>
</evidence>
<protein>
    <recommendedName>
        <fullName evidence="1">7-cyano-7-deazaguanine synthase</fullName>
        <ecNumber evidence="1">6.3.4.20</ecNumber>
    </recommendedName>
    <alternativeName>
        <fullName evidence="1">7-cyano-7-carbaguanine synthase</fullName>
    </alternativeName>
    <alternativeName>
        <fullName evidence="1">PreQ(0) synthase</fullName>
    </alternativeName>
    <alternativeName>
        <fullName evidence="1">Queuosine biosynthesis protein QueC</fullName>
    </alternativeName>
</protein>
<reference key="1">
    <citation type="journal article" date="2008" name="PLoS ONE">
        <title>A recalibrated molecular clock and independent origins for the cholera pandemic clones.</title>
        <authorList>
            <person name="Feng L."/>
            <person name="Reeves P.R."/>
            <person name="Lan R."/>
            <person name="Ren Y."/>
            <person name="Gao C."/>
            <person name="Zhou Z."/>
            <person name="Ren Y."/>
            <person name="Cheng J."/>
            <person name="Wang W."/>
            <person name="Wang J."/>
            <person name="Qian W."/>
            <person name="Li D."/>
            <person name="Wang L."/>
        </authorList>
    </citation>
    <scope>NUCLEOTIDE SEQUENCE [LARGE SCALE GENOMIC DNA]</scope>
    <source>
        <strain>M66-2</strain>
    </source>
</reference>
<sequence length="231" mass="25159">MKKAVVVFSGGQDSTTCLVQALKEFDEVHAITFDYGQRHKLEIEVAQQLAKQLGVTAHKVMDVSLLNELAISSLTRDDIPVSHELQANGLPNSFVPGRNILFLTLAGIYAYQIGATTVITGVCETDFSGYPDCRDEFVQAMNQALAKGMDLPLMIRTPLMWLNKAETWALADQLGALDLVRHQTLTCYNGLIGDGCGECPACGLRQAGLKAYLDNRDLIMSALKSKQSAAH</sequence>